<sequence>MAGGKAGKDTGKAKATSITRSSRAGLQFPVGRIHRLLKNRTTSHGRVGGTAAVYTAAILEYLTAEVLELAGNASKDLKVKRISPRHLQLAIRGDEELDALIKATIAGGGVIPHIHKSLIGKKGQQKTV</sequence>
<reference key="1">
    <citation type="journal article" date="1996" name="Nucleic Acids Res.">
        <title>H2A.Zl, a new variant histone expressed during Xenopus early development exhibits several distinct features from the core histone H2A.</title>
        <authorList>
            <person name="Iouzalen N."/>
            <person name="Moreau J."/>
            <person name="Mechali M."/>
        </authorList>
    </citation>
    <scope>NUCLEOTIDE SEQUENCE [MRNA]</scope>
    <scope>TISSUE SPECIFICITY</scope>
    <scope>DEVELOPMENTAL STAGE</scope>
    <source>
        <tissue>Oocyte</tissue>
    </source>
</reference>
<reference key="2">
    <citation type="submission" date="1996-11" db="EMBL/GenBank/DDBJ databases">
        <title>Histone H2A.z displays a neural-specific expression pattern in Xenopus.</title>
        <authorList>
            <person name="Aberger F."/>
            <person name="Grunz H."/>
            <person name="Richter K."/>
        </authorList>
    </citation>
    <scope>NUCLEOTIDE SEQUENCE [MRNA]</scope>
</reference>
<reference key="3">
    <citation type="submission" date="2003-01" db="EMBL/GenBank/DDBJ databases">
        <authorList>
            <consortium name="NIH - Xenopus Gene Collection (XGC) project"/>
        </authorList>
    </citation>
    <scope>NUCLEOTIDE SEQUENCE [LARGE SCALE MRNA]</scope>
    <source>
        <tissue>Egg</tissue>
        <tissue>Embryo</tissue>
    </source>
</reference>
<reference key="4">
    <citation type="journal article" date="2004" name="J. Biol. Chem.">
        <title>Unique residues on the H2A.Z containing nucleosome surface are important for Xenopus laevis development.</title>
        <authorList>
            <person name="Ridgway P."/>
            <person name="Brown K.D."/>
            <person name="Rangasamy D."/>
            <person name="Svensson U."/>
            <person name="Tremethick D.J."/>
        </authorList>
    </citation>
    <scope>FUNCTION</scope>
    <scope>DEVELOPMENTAL STAGE</scope>
</reference>
<keyword id="KW-0007">Acetylation</keyword>
<keyword id="KW-0158">Chromosome</keyword>
<keyword id="KW-0217">Developmental protein</keyword>
<keyword id="KW-0238">DNA-binding</keyword>
<keyword id="KW-1017">Isopeptide bond</keyword>
<keyword id="KW-0544">Nucleosome core</keyword>
<keyword id="KW-0539">Nucleus</keyword>
<keyword id="KW-1185">Reference proteome</keyword>
<keyword id="KW-0832">Ubl conjugation</keyword>
<feature type="initiator methionine" description="Removed" evidence="1">
    <location>
        <position position="1"/>
    </location>
</feature>
<feature type="chain" id="PRO_0000239072" description="Histone H2A.Z-like">
    <location>
        <begin position="2"/>
        <end position="128"/>
    </location>
</feature>
<feature type="region of interest" description="Disordered" evidence="3">
    <location>
        <begin position="1"/>
        <end position="20"/>
    </location>
</feature>
<feature type="compositionally biased region" description="Basic and acidic residues" evidence="3">
    <location>
        <begin position="1"/>
        <end position="12"/>
    </location>
</feature>
<feature type="modified residue" description="N6-acetyllysine" evidence="1">
    <location>
        <position position="5"/>
    </location>
</feature>
<feature type="modified residue" description="N6-acetyllysine" evidence="1">
    <location>
        <position position="8"/>
    </location>
</feature>
<feature type="modified residue" description="N6-acetyllysine" evidence="1">
    <location>
        <position position="12"/>
    </location>
</feature>
<feature type="modified residue" description="N6-lactoyllysine; alternate" evidence="2">
    <location>
        <position position="12"/>
    </location>
</feature>
<feature type="modified residue" description="N6-lactoyllysine; alternate" evidence="2">
    <location>
        <position position="14"/>
    </location>
</feature>
<feature type="modified residue" description="N6-lactoyllysine" evidence="2">
    <location>
        <position position="116"/>
    </location>
</feature>
<feature type="cross-link" description="Glycyl lysine isopeptide (Lys-Gly) (interchain with G-Cter in ubiquitin)" evidence="1">
    <location>
        <position position="122"/>
    </location>
</feature>
<gene>
    <name type="primary">h2a.zl1</name>
    <name type="synonym">h2a.zl2</name>
</gene>
<proteinExistence type="evidence at transcript level"/>
<name>H2AZL_XENLA</name>
<comment type="function">
    <text evidence="4">Variant histone H2A which replaces conventional H2A in a subset of nucleosomes. Nucleosomes wrap and compact DNA into chromatin, limiting DNA accessibility to the cellular machineries which require DNA as a template. Histones thereby play a central role in transcription regulation, DNA repair, DNA replication and chromosomal stability. DNA accessibility is regulated via a complex set of post-translational modifications of histones, also called histone code, and nucleosome remodeling. May be required at gastrulation for correct mesoderm formation.</text>
</comment>
<comment type="subunit">
    <text evidence="1">The nucleosome is a histone octamer containing two molecules each of H2A, H2B, H3 and H4 assembled in one H3-H4 heterotetramer and two H2A-H2B heterodimers. The octamer wraps approximately 147 bp of DNA. H2A or its variant H2A.Zl forms a heterodimer with H2B (By similarity).</text>
</comment>
<comment type="subcellular location">
    <subcellularLocation>
        <location evidence="1">Nucleus</location>
    </subcellularLocation>
    <subcellularLocation>
        <location evidence="1">Chromosome</location>
    </subcellularLocation>
</comment>
<comment type="tissue specificity">
    <text evidence="5">Ubiquitously expressed.</text>
</comment>
<comment type="developmental stage">
    <text evidence="4 5">Expression is highest at the gastrula stage. Expressed preferentially in tissues of mesoderm origin, such as the notochord and some regions of the primitive ear.</text>
</comment>
<comment type="PTM">
    <text evidence="1">Monoubiquitination of Lys-122 gives a specific tag for epigenetic transcriptional repression.</text>
</comment>
<comment type="similarity">
    <text evidence="6">Belongs to the histone H2A family.</text>
</comment>
<evidence type="ECO:0000250" key="1"/>
<evidence type="ECO:0000250" key="2">
    <source>
        <dbReference type="UniProtKB" id="P0C0S5"/>
    </source>
</evidence>
<evidence type="ECO:0000256" key="3">
    <source>
        <dbReference type="SAM" id="MobiDB-lite"/>
    </source>
</evidence>
<evidence type="ECO:0000269" key="4">
    <source>
    </source>
</evidence>
<evidence type="ECO:0000269" key="5">
    <source>
    </source>
</evidence>
<evidence type="ECO:0000305" key="6"/>
<accession>P70094</accession>
<accession>O13272</accession>
<accession>O13273</accession>
<protein>
    <recommendedName>
        <fullName>Histone H2A.Z-like</fullName>
        <shortName>H2A.Zl</shortName>
    </recommendedName>
    <alternativeName>
        <fullName>H2A.Z1</fullName>
    </alternativeName>
    <alternativeName>
        <fullName>XH2AZ</fullName>
    </alternativeName>
</protein>
<organism>
    <name type="scientific">Xenopus laevis</name>
    <name type="common">African clawed frog</name>
    <dbReference type="NCBI Taxonomy" id="8355"/>
    <lineage>
        <taxon>Eukaryota</taxon>
        <taxon>Metazoa</taxon>
        <taxon>Chordata</taxon>
        <taxon>Craniata</taxon>
        <taxon>Vertebrata</taxon>
        <taxon>Euteleostomi</taxon>
        <taxon>Amphibia</taxon>
        <taxon>Batrachia</taxon>
        <taxon>Anura</taxon>
        <taxon>Pipoidea</taxon>
        <taxon>Pipidae</taxon>
        <taxon>Xenopodinae</taxon>
        <taxon>Xenopus</taxon>
        <taxon>Xenopus</taxon>
    </lineage>
</organism>
<dbReference type="EMBL" id="X98535">
    <property type="protein sequence ID" value="CAA67148.1"/>
    <property type="molecule type" value="mRNA"/>
</dbReference>
<dbReference type="EMBL" id="X98536">
    <property type="protein sequence ID" value="CAA67149.1"/>
    <property type="molecule type" value="mRNA"/>
</dbReference>
<dbReference type="EMBL" id="U77893">
    <property type="protein sequence ID" value="AAB36781.1"/>
    <property type="molecule type" value="mRNA"/>
</dbReference>
<dbReference type="EMBL" id="BC044011">
    <property type="protein sequence ID" value="AAH44011.1"/>
    <property type="molecule type" value="mRNA"/>
</dbReference>
<dbReference type="EMBL" id="BC091714">
    <property type="protein sequence ID" value="AAH91714.1"/>
    <property type="molecule type" value="mRNA"/>
</dbReference>
<dbReference type="RefSeq" id="NP_001079528.1">
    <property type="nucleotide sequence ID" value="NM_001086059.1"/>
</dbReference>
<dbReference type="SMR" id="P70094"/>
<dbReference type="BioGRID" id="97458">
    <property type="interactions" value="2"/>
</dbReference>
<dbReference type="DNASU" id="379215"/>
<dbReference type="DNASU" id="397949"/>
<dbReference type="GeneID" id="379215"/>
<dbReference type="KEGG" id="xla:379215"/>
<dbReference type="KEGG" id="xla:397949"/>
<dbReference type="CTD" id="379215"/>
<dbReference type="CTD" id="397949"/>
<dbReference type="OrthoDB" id="9421954at2759"/>
<dbReference type="Proteomes" id="UP000186698">
    <property type="component" value="Chromosome 1L"/>
</dbReference>
<dbReference type="Proteomes" id="UP000186698">
    <property type="component" value="Chromosome 1S"/>
</dbReference>
<dbReference type="Bgee" id="379215">
    <property type="expression patterns" value="Expressed in gastrula and 19 other cell types or tissues"/>
</dbReference>
<dbReference type="GO" id="GO:0000786">
    <property type="term" value="C:nucleosome"/>
    <property type="evidence" value="ECO:0000318"/>
    <property type="project" value="GO_Central"/>
</dbReference>
<dbReference type="GO" id="GO:0005634">
    <property type="term" value="C:nucleus"/>
    <property type="evidence" value="ECO:0000318"/>
    <property type="project" value="GO_Central"/>
</dbReference>
<dbReference type="GO" id="GO:0003677">
    <property type="term" value="F:DNA binding"/>
    <property type="evidence" value="ECO:0007669"/>
    <property type="project" value="UniProtKB-KW"/>
</dbReference>
<dbReference type="GO" id="GO:0046982">
    <property type="term" value="F:protein heterodimerization activity"/>
    <property type="evidence" value="ECO:0007669"/>
    <property type="project" value="InterPro"/>
</dbReference>
<dbReference type="GO" id="GO:0030527">
    <property type="term" value="F:structural constituent of chromatin"/>
    <property type="evidence" value="ECO:0000318"/>
    <property type="project" value="GO_Central"/>
</dbReference>
<dbReference type="GO" id="GO:0031507">
    <property type="term" value="P:heterochromatin formation"/>
    <property type="evidence" value="ECO:0000318"/>
    <property type="project" value="GO_Central"/>
</dbReference>
<dbReference type="CDD" id="cd00074">
    <property type="entry name" value="HFD_H2A"/>
    <property type="match status" value="1"/>
</dbReference>
<dbReference type="FunFam" id="1.10.20.10:FF:000005">
    <property type="entry name" value="Histone H2A"/>
    <property type="match status" value="1"/>
</dbReference>
<dbReference type="Gene3D" id="1.10.20.10">
    <property type="entry name" value="Histone, subunit A"/>
    <property type="match status" value="1"/>
</dbReference>
<dbReference type="InterPro" id="IPR009072">
    <property type="entry name" value="Histone-fold"/>
</dbReference>
<dbReference type="InterPro" id="IPR002119">
    <property type="entry name" value="Histone_H2A"/>
</dbReference>
<dbReference type="InterPro" id="IPR007125">
    <property type="entry name" value="Histone_H2A/H2B/H3"/>
</dbReference>
<dbReference type="InterPro" id="IPR032454">
    <property type="entry name" value="Histone_H2A_C"/>
</dbReference>
<dbReference type="InterPro" id="IPR032458">
    <property type="entry name" value="Histone_H2A_CS"/>
</dbReference>
<dbReference type="PANTHER" id="PTHR23430">
    <property type="entry name" value="HISTONE H2A"/>
    <property type="match status" value="1"/>
</dbReference>
<dbReference type="Pfam" id="PF00125">
    <property type="entry name" value="Histone"/>
    <property type="match status" value="1"/>
</dbReference>
<dbReference type="Pfam" id="PF16211">
    <property type="entry name" value="Histone_H2A_C"/>
    <property type="match status" value="1"/>
</dbReference>
<dbReference type="PRINTS" id="PR00620">
    <property type="entry name" value="HISTONEH2A"/>
</dbReference>
<dbReference type="SMART" id="SM00414">
    <property type="entry name" value="H2A"/>
    <property type="match status" value="1"/>
</dbReference>
<dbReference type="SUPFAM" id="SSF47113">
    <property type="entry name" value="Histone-fold"/>
    <property type="match status" value="1"/>
</dbReference>
<dbReference type="PROSITE" id="PS00046">
    <property type="entry name" value="HISTONE_H2A"/>
    <property type="match status" value="1"/>
</dbReference>